<sequence>MDPEHAKPESSEAPSGNLKQPETAAALSLILGALACFIITQANESFITITSLEICIVVFFILIYVLTLHHLLTYLHWPLLDLTNSIITAVFLSVVAILAMQEKKRRHLLYVGGSLCLTAVIVCCIDAFVVTTKMRTNLKRFLGVEVERKLSPAKDAYPETGPDAPQRPA</sequence>
<evidence type="ECO:0000255" key="1"/>
<evidence type="ECO:0000255" key="2">
    <source>
        <dbReference type="PROSITE-ProRule" id="PRU00581"/>
    </source>
</evidence>
<evidence type="ECO:0000269" key="3">
    <source>
    </source>
</evidence>
<evidence type="ECO:0000269" key="4">
    <source>
    </source>
</evidence>
<evidence type="ECO:0000303" key="5">
    <source>
    </source>
</evidence>
<evidence type="ECO:0000303" key="6">
    <source>
    </source>
</evidence>
<evidence type="ECO:0000303" key="7">
    <source ref="3"/>
</evidence>
<evidence type="ECO:0000305" key="8"/>
<accession>Q8IZ96</accession>
<accession>Q2PPY5</accession>
<accession>Q6PEV5</accession>
<accession>Q8IU76</accession>
<accession>Q8IU83</accession>
<accession>Q8IU86</accession>
<accession>Q8IU93</accession>
<accession>Q8IZ87</accession>
<accession>Q8IZ88</accession>
<accession>Q8IZ89</accession>
<accession>Q8IZ90</accession>
<accession>Q8IZ91</accession>
<accession>Q8IZ92</accession>
<accession>Q8IZ93</accession>
<accession>Q8IZ94</accession>
<accession>Q8IZ95</accession>
<accession>Q96JC2</accession>
<accession>Q96JC3</accession>
<organism>
    <name type="scientific">Homo sapiens</name>
    <name type="common">Human</name>
    <dbReference type="NCBI Taxonomy" id="9606"/>
    <lineage>
        <taxon>Eukaryota</taxon>
        <taxon>Metazoa</taxon>
        <taxon>Chordata</taxon>
        <taxon>Craniata</taxon>
        <taxon>Vertebrata</taxon>
        <taxon>Euteleostomi</taxon>
        <taxon>Mammalia</taxon>
        <taxon>Eutheria</taxon>
        <taxon>Euarchontoglires</taxon>
        <taxon>Primates</taxon>
        <taxon>Haplorrhini</taxon>
        <taxon>Catarrhini</taxon>
        <taxon>Hominidae</taxon>
        <taxon>Homo</taxon>
    </lineage>
</organism>
<comment type="subcellular location">
    <subcellularLocation>
        <location>Membrane</location>
        <topology>Multi-pass membrane protein</topology>
    </subcellularLocation>
</comment>
<comment type="alternative products">
    <event type="alternative splicing"/>
    <isoform>
        <id>Q8IZ96-1</id>
        <name>1</name>
        <sequence type="displayed"/>
    </isoform>
    <isoform>
        <id>Q8IZ96-2</id>
        <name>1a</name>
        <name>17</name>
        <sequence type="described" ref="VSP_008229"/>
    </isoform>
    <isoform>
        <id>Q8IZ96-3</id>
        <name>1b</name>
        <sequence type="described" ref="VSP_008229 VSP_008252"/>
    </isoform>
    <isoform>
        <id>Q8IZ96-4</id>
        <name>2</name>
        <sequence type="described" ref="VSP_008251 VSP_008252"/>
    </isoform>
    <isoform>
        <id>Q8IZ96-5</id>
        <name>3</name>
        <sequence type="described" ref="VSP_008234 VSP_008242"/>
    </isoform>
    <isoform>
        <id>Q8IZ96-6</id>
        <name>4</name>
        <sequence type="described" ref="VSP_008237"/>
    </isoform>
    <isoform>
        <id>Q8IZ96-7</id>
        <name>5</name>
        <sequence type="described" ref="VSP_008237 VSP_008251 VSP_008252"/>
    </isoform>
    <isoform>
        <id>Q8IZ96-8</id>
        <name>6</name>
        <name>7</name>
        <sequence type="described" ref="VSP_008238 VSP_008249"/>
    </isoform>
    <isoform>
        <id>Q8IZ96-9</id>
        <name>8</name>
        <name>9</name>
        <sequence type="described" ref="VSP_008247 VSP_008248"/>
    </isoform>
    <isoform>
        <id>Q8IZ96-10</id>
        <name>10</name>
        <sequence type="described" ref="VSP_008236 VSP_008244"/>
    </isoform>
    <isoform>
        <id>Q8IZ96-11</id>
        <name>11</name>
        <sequence type="described" ref="VSP_008233 VSP_008241"/>
    </isoform>
    <isoform>
        <id>Q8IZ96-12</id>
        <name>12</name>
        <sequence type="described" ref="VSP_008230 VSP_008245 VSP_008246 VSP_008250"/>
    </isoform>
    <isoform>
        <id>Q8IZ96-13</id>
        <name>13</name>
        <sequence type="described" ref="VSP_008235 VSP_008243"/>
    </isoform>
    <isoform>
        <id>Q8IZ96-14</id>
        <name>14</name>
        <name>15</name>
        <sequence type="described" ref="VSP_008232 VSP_008240"/>
    </isoform>
    <isoform>
        <id>Q8IZ96-15</id>
        <name>16</name>
        <sequence type="described" ref="VSP_008231 VSP_008239"/>
    </isoform>
    <isoform>
        <id>Q8IZ96-16</id>
        <name>19</name>
        <name>20,21,22,23</name>
        <sequence type="described" ref="VSP_008229 VSP_008247 VSP_008248"/>
    </isoform>
    <isoform>
        <id>Q8IZ96-17</id>
        <name>24</name>
        <sequence type="described" ref="VSP_043579"/>
    </isoform>
</comment>
<comment type="tissue specificity">
    <text evidence="3 4">Highly expressed in testis.</text>
</comment>
<comment type="similarity">
    <text evidence="8">Belongs to the chemokine-like factor family.</text>
</comment>
<protein>
    <recommendedName>
        <fullName>CKLF-like MARVEL transmembrane domain-containing protein 1</fullName>
    </recommendedName>
    <alternativeName>
        <fullName>Chemokine-like factor superfamily member 1</fullName>
    </alternativeName>
</protein>
<reference key="1">
    <citation type="journal article" date="2003" name="Genomics">
        <title>Identification of eight genes encoding chemokine-like factor superfamily members 1-8 (CKLFSF1-8) by in silico cloning and experimental validation.</title>
        <authorList>
            <person name="Han W."/>
            <person name="Ding P."/>
            <person name="Xu M."/>
            <person name="Wang L."/>
            <person name="Rui M."/>
            <person name="Shi S."/>
            <person name="Liu Y."/>
            <person name="Zheng Y."/>
            <person name="Chen Y."/>
            <person name="Yang T."/>
            <person name="Ma D."/>
        </authorList>
    </citation>
    <scope>NUCLEOTIDE SEQUENCE [MRNA] (ISOFORM 1)</scope>
    <scope>TISSUE SPECIFICITY</scope>
    <source>
        <tissue>Testis</tissue>
    </source>
</reference>
<reference key="2">
    <citation type="journal article" date="2004" name="Int. J. Biochem. Cell Biol.">
        <title>Molecular cloning and characterization of chemokine-like factor super family member 1 (CKLFSF1), a novel human gene with at least 23 alternative splicing isoforms in testis tissue.</title>
        <authorList>
            <person name="Wang L."/>
            <person name="Wu C."/>
            <person name="Zheng Y."/>
            <person name="Qiu X."/>
            <person name="Wang L."/>
            <person name="Fan H."/>
            <person name="Han W."/>
            <person name="Lv B."/>
            <person name="Wang Y."/>
            <person name="Zhu X."/>
            <person name="Xu M."/>
            <person name="Ding P."/>
            <person name="Cheng S."/>
            <person name="Zhang Y."/>
            <person name="Song Q."/>
            <person name="Ma D."/>
        </authorList>
    </citation>
    <scope>NUCLEOTIDE SEQUENCE [MRNA] (ISOFORMS 1A; 1B; 2; 3; 4; 5; 6; 8; 10; 11; 12; 13; 14; 16 AND 19)</scope>
    <scope>TISSUE SPECIFICITY</scope>
    <source>
        <tissue>Testis</tissue>
    </source>
</reference>
<reference key="3">
    <citation type="submission" date="2005-11" db="EMBL/GenBank/DDBJ databases">
        <title>Homo sapiens chemokine-like factor superfamily 1 (CKLFSF1), transcript variant 24.</title>
        <authorList>
            <person name="Wang J."/>
            <person name="Wang L."/>
        </authorList>
    </citation>
    <scope>NUCLEOTIDE SEQUENCE [MRNA] (ISOFORM 19)</scope>
</reference>
<reference key="4">
    <citation type="journal article" date="2004" name="Nature">
        <title>The sequence and analysis of duplication-rich human chromosome 16.</title>
        <authorList>
            <person name="Martin J."/>
            <person name="Han C."/>
            <person name="Gordon L.A."/>
            <person name="Terry A."/>
            <person name="Prabhakar S."/>
            <person name="She X."/>
            <person name="Xie G."/>
            <person name="Hellsten U."/>
            <person name="Chan Y.M."/>
            <person name="Altherr M."/>
            <person name="Couronne O."/>
            <person name="Aerts A."/>
            <person name="Bajorek E."/>
            <person name="Black S."/>
            <person name="Blumer H."/>
            <person name="Branscomb E."/>
            <person name="Brown N.C."/>
            <person name="Bruno W.J."/>
            <person name="Buckingham J.M."/>
            <person name="Callen D.F."/>
            <person name="Campbell C.S."/>
            <person name="Campbell M.L."/>
            <person name="Campbell E.W."/>
            <person name="Caoile C."/>
            <person name="Challacombe J.F."/>
            <person name="Chasteen L.A."/>
            <person name="Chertkov O."/>
            <person name="Chi H.C."/>
            <person name="Christensen M."/>
            <person name="Clark L.M."/>
            <person name="Cohn J.D."/>
            <person name="Denys M."/>
            <person name="Detter J.C."/>
            <person name="Dickson M."/>
            <person name="Dimitrijevic-Bussod M."/>
            <person name="Escobar J."/>
            <person name="Fawcett J.J."/>
            <person name="Flowers D."/>
            <person name="Fotopulos D."/>
            <person name="Glavina T."/>
            <person name="Gomez M."/>
            <person name="Gonzales E."/>
            <person name="Goodstein D."/>
            <person name="Goodwin L.A."/>
            <person name="Grady D.L."/>
            <person name="Grigoriev I."/>
            <person name="Groza M."/>
            <person name="Hammon N."/>
            <person name="Hawkins T."/>
            <person name="Haydu L."/>
            <person name="Hildebrand C.E."/>
            <person name="Huang W."/>
            <person name="Israni S."/>
            <person name="Jett J."/>
            <person name="Jewett P.B."/>
            <person name="Kadner K."/>
            <person name="Kimball H."/>
            <person name="Kobayashi A."/>
            <person name="Krawczyk M.-C."/>
            <person name="Leyba T."/>
            <person name="Longmire J.L."/>
            <person name="Lopez F."/>
            <person name="Lou Y."/>
            <person name="Lowry S."/>
            <person name="Ludeman T."/>
            <person name="Manohar C.F."/>
            <person name="Mark G.A."/>
            <person name="McMurray K.L."/>
            <person name="Meincke L.J."/>
            <person name="Morgan J."/>
            <person name="Moyzis R.K."/>
            <person name="Mundt M.O."/>
            <person name="Munk A.C."/>
            <person name="Nandkeshwar R.D."/>
            <person name="Pitluck S."/>
            <person name="Pollard M."/>
            <person name="Predki P."/>
            <person name="Parson-Quintana B."/>
            <person name="Ramirez L."/>
            <person name="Rash S."/>
            <person name="Retterer J."/>
            <person name="Ricke D.O."/>
            <person name="Robinson D.L."/>
            <person name="Rodriguez A."/>
            <person name="Salamov A."/>
            <person name="Saunders E.H."/>
            <person name="Scott D."/>
            <person name="Shough T."/>
            <person name="Stallings R.L."/>
            <person name="Stalvey M."/>
            <person name="Sutherland R.D."/>
            <person name="Tapia R."/>
            <person name="Tesmer J.G."/>
            <person name="Thayer N."/>
            <person name="Thompson L.S."/>
            <person name="Tice H."/>
            <person name="Torney D.C."/>
            <person name="Tran-Gyamfi M."/>
            <person name="Tsai M."/>
            <person name="Ulanovsky L.E."/>
            <person name="Ustaszewska A."/>
            <person name="Vo N."/>
            <person name="White P.S."/>
            <person name="Williams A.L."/>
            <person name="Wills P.L."/>
            <person name="Wu J.-R."/>
            <person name="Wu K."/>
            <person name="Yang J."/>
            <person name="DeJong P."/>
            <person name="Bruce D."/>
            <person name="Doggett N.A."/>
            <person name="Deaven L."/>
            <person name="Schmutz J."/>
            <person name="Grimwood J."/>
            <person name="Richardson P."/>
            <person name="Rokhsar D.S."/>
            <person name="Eichler E.E."/>
            <person name="Gilna P."/>
            <person name="Lucas S.M."/>
            <person name="Myers R.M."/>
            <person name="Rubin E.M."/>
            <person name="Pennacchio L.A."/>
        </authorList>
    </citation>
    <scope>NUCLEOTIDE SEQUENCE [LARGE SCALE GENOMIC DNA]</scope>
</reference>
<reference key="5">
    <citation type="submission" date="2005-07" db="EMBL/GenBank/DDBJ databases">
        <authorList>
            <person name="Mural R.J."/>
            <person name="Istrail S."/>
            <person name="Sutton G."/>
            <person name="Florea L."/>
            <person name="Halpern A.L."/>
            <person name="Mobarry C.M."/>
            <person name="Lippert R."/>
            <person name="Walenz B."/>
            <person name="Shatkay H."/>
            <person name="Dew I."/>
            <person name="Miller J.R."/>
            <person name="Flanigan M.J."/>
            <person name="Edwards N.J."/>
            <person name="Bolanos R."/>
            <person name="Fasulo D."/>
            <person name="Halldorsson B.V."/>
            <person name="Hannenhalli S."/>
            <person name="Turner R."/>
            <person name="Yooseph S."/>
            <person name="Lu F."/>
            <person name="Nusskern D.R."/>
            <person name="Shue B.C."/>
            <person name="Zheng X.H."/>
            <person name="Zhong F."/>
            <person name="Delcher A.L."/>
            <person name="Huson D.H."/>
            <person name="Kravitz S.A."/>
            <person name="Mouchard L."/>
            <person name="Reinert K."/>
            <person name="Remington K.A."/>
            <person name="Clark A.G."/>
            <person name="Waterman M.S."/>
            <person name="Eichler E.E."/>
            <person name="Adams M.D."/>
            <person name="Hunkapiller M.W."/>
            <person name="Myers E.W."/>
            <person name="Venter J.C."/>
        </authorList>
    </citation>
    <scope>NUCLEOTIDE SEQUENCE [LARGE SCALE GENOMIC DNA]</scope>
</reference>
<reference key="6">
    <citation type="journal article" date="2004" name="Genome Res.">
        <title>The status, quality, and expansion of the NIH full-length cDNA project: the Mammalian Gene Collection (MGC).</title>
        <authorList>
            <consortium name="The MGC Project Team"/>
        </authorList>
    </citation>
    <scope>NUCLEOTIDE SEQUENCE [LARGE SCALE MRNA] (ISOFORM 24)</scope>
    <source>
        <tissue>Testis</tissue>
    </source>
</reference>
<name>CKLF1_HUMAN</name>
<gene>
    <name type="primary">CMTM1</name>
    <name type="synonym">CKLFSF1</name>
</gene>
<proteinExistence type="evidence at protein level"/>
<feature type="chain" id="PRO_0000186097" description="CKLF-like MARVEL transmembrane domain-containing protein 1">
    <location>
        <begin position="1"/>
        <end position="169"/>
    </location>
</feature>
<feature type="transmembrane region" description="Helical" evidence="1">
    <location>
        <begin position="22"/>
        <end position="42"/>
    </location>
</feature>
<feature type="transmembrane region" description="Helical" evidence="1">
    <location>
        <begin position="46"/>
        <end position="66"/>
    </location>
</feature>
<feature type="transmembrane region" description="Helical" evidence="1">
    <location>
        <begin position="79"/>
        <end position="99"/>
    </location>
</feature>
<feature type="transmembrane region" description="Helical" evidence="1">
    <location>
        <begin position="110"/>
        <end position="130"/>
    </location>
</feature>
<feature type="domain" description="MARVEL" evidence="2">
    <location>
        <begin position="17"/>
        <end position="135"/>
    </location>
</feature>
<feature type="splice variant" id="VSP_008229" description="In isoform 1a, isoform 1b and isoform 19." evidence="5 7">
    <original>MDPEHAKPESSEAPSGNLKQPETAAA</original>
    <variation>MLKILR</variation>
    <location>
        <begin position="1"/>
        <end position="26"/>
    </location>
</feature>
<feature type="splice variant" id="VSP_008230" description="In isoform 12." evidence="5">
    <location>
        <begin position="8"/>
        <end position="65"/>
    </location>
</feature>
<feature type="splice variant" id="VSP_043579" description="In isoform 24." evidence="6">
    <original>A</original>
    <variation>ALASSGSVVSSVPKAQRNISAKTAPRKHPAVSIRSAQSAAAARPQGSEGTAPSRKATTRPPPKPTLPPPTPSAHTESKLLNEMAIKERVEGRAKVPYKFRDSLKRFSFSPTGMLKILR</variation>
    <location>
        <position position="26"/>
    </location>
</feature>
<feature type="splice variant" id="VSP_008238" description="In isoform 6." evidence="5">
    <original>SLILGALACFIITQANESFITITSLEICIVVFFILIYVLTLHHLLTYLHWPLLDLTNSIITAVFL</original>
    <variation>ASSGSVVSSVPKAQRNISAKTAPRKHPAVSIRSAQSAAAARPQGSEGTAPSRILPTVSLQLCSFQ</variation>
    <location>
        <begin position="28"/>
        <end position="92"/>
    </location>
</feature>
<feature type="splice variant" id="VSP_008237" description="In isoform 4 and isoform 5." evidence="5">
    <location>
        <begin position="28"/>
        <end position="80"/>
    </location>
</feature>
<feature type="splice variant" id="VSP_008236" description="In isoform 10." evidence="5">
    <original>SLILGALACFIITQANESFITITSLEICIVVFFILIYV</original>
    <variation>ASSGSVVSSVPKAQRNISAKTAPRKHPETGPDAPQRPA</variation>
    <location>
        <begin position="28"/>
        <end position="65"/>
    </location>
</feature>
<feature type="splice variant" id="VSP_008235" description="In isoform 13." evidence="5">
    <original>SLILGALACFI</original>
    <variation>EADKANMSNFN</variation>
    <location>
        <begin position="28"/>
        <end position="38"/>
    </location>
</feature>
<feature type="splice variant" id="VSP_008233" description="In isoform 11." evidence="5">
    <original>SLILGA</original>
    <variation>EAYNSK</variation>
    <location>
        <begin position="28"/>
        <end position="33"/>
    </location>
</feature>
<feature type="splice variant" id="VSP_008234" description="In isoform 3." evidence="5">
    <original>SLILGA</original>
    <variation>ASSGSV</variation>
    <location>
        <begin position="28"/>
        <end position="33"/>
    </location>
</feature>
<feature type="splice variant" id="VSP_008232" description="In isoform 14." evidence="5">
    <original>SLILG</original>
    <variation>LCSFQ</variation>
    <location>
        <begin position="28"/>
        <end position="32"/>
    </location>
</feature>
<feature type="splice variant" id="VSP_008231" description="In isoform 16." evidence="5">
    <original>S</original>
    <variation>R</variation>
    <location>
        <position position="28"/>
    </location>
</feature>
<feature type="splice variant" id="VSP_008239" description="In isoform 16." evidence="5">
    <location>
        <begin position="29"/>
        <end position="169"/>
    </location>
</feature>
<feature type="splice variant" id="VSP_008240" description="In isoform 14." evidence="5">
    <location>
        <begin position="33"/>
        <end position="169"/>
    </location>
</feature>
<feature type="splice variant" id="VSP_008241" description="In isoform 11." evidence="5">
    <location>
        <begin position="34"/>
        <end position="169"/>
    </location>
</feature>
<feature type="splice variant" id="VSP_008242" description="In isoform 3." evidence="5">
    <location>
        <begin position="34"/>
        <end position="80"/>
    </location>
</feature>
<feature type="splice variant" id="VSP_008243" description="In isoform 13." evidence="5">
    <location>
        <begin position="39"/>
        <end position="169"/>
    </location>
</feature>
<feature type="splice variant" id="VSP_008244" description="In isoform 10." evidence="5">
    <location>
        <begin position="66"/>
        <end position="169"/>
    </location>
</feature>
<feature type="splice variant" id="VSP_008245" description="In isoform 12." evidence="5">
    <original>W</original>
    <variation>R</variation>
    <location>
        <position position="77"/>
    </location>
</feature>
<feature type="splice variant" id="VSP_008246" description="In isoform 12." evidence="5">
    <original>DLTNSIITAVFLSVVAILAMQEK</original>
    <variation>AAELSLSHRMPSTGSRQSKYEQL</variation>
    <location>
        <begin position="81"/>
        <end position="103"/>
    </location>
</feature>
<feature type="splice variant" id="VSP_008247" description="In isoform 8 and isoform 19." evidence="5 7">
    <original>DLTNSIITAVF</original>
    <variation>NAEYRKQTKQI</variation>
    <location>
        <begin position="81"/>
        <end position="91"/>
    </location>
</feature>
<feature type="splice variant" id="VSP_008248" description="In isoform 8 and isoform 19." evidence="5 7">
    <location>
        <begin position="92"/>
        <end position="169"/>
    </location>
</feature>
<feature type="splice variant" id="VSP_008249" description="In isoform 6." evidence="5">
    <location>
        <begin position="93"/>
        <end position="169"/>
    </location>
</feature>
<feature type="splice variant" id="VSP_008250" description="In isoform 12." evidence="5">
    <location>
        <begin position="104"/>
        <end position="169"/>
    </location>
</feature>
<feature type="splice variant" id="VSP_008251" description="In isoform 2 and isoform 5." evidence="5">
    <original>S</original>
    <variation>R</variation>
    <location>
        <position position="114"/>
    </location>
</feature>
<feature type="splice variant" id="VSP_008252" description="In isoform 1b, isoform 2 and isoform 5." evidence="5">
    <location>
        <begin position="115"/>
        <end position="169"/>
    </location>
</feature>
<feature type="sequence variant" id="VAR_053039" description="In dbSNP:rs16956746.">
    <original>S</original>
    <variation>T</variation>
    <location>
        <position position="10"/>
    </location>
</feature>
<dbReference type="EMBL" id="AF278576">
    <property type="protein sequence ID" value="AAK73015.1"/>
    <property type="molecule type" value="mRNA"/>
</dbReference>
<dbReference type="EMBL" id="AF278577">
    <property type="protein sequence ID" value="AAK73016.1"/>
    <property type="molecule type" value="mRNA"/>
</dbReference>
<dbReference type="EMBL" id="AY174118">
    <property type="protein sequence ID" value="AAN73227.1"/>
    <property type="molecule type" value="mRNA"/>
</dbReference>
<dbReference type="EMBL" id="AY174119">
    <property type="protein sequence ID" value="AAN73228.1"/>
    <property type="molecule type" value="mRNA"/>
</dbReference>
<dbReference type="EMBL" id="AY174120">
    <property type="protein sequence ID" value="AAN73229.1"/>
    <property type="molecule type" value="mRNA"/>
</dbReference>
<dbReference type="EMBL" id="AY174121">
    <property type="protein sequence ID" value="AAN73230.1"/>
    <property type="molecule type" value="mRNA"/>
</dbReference>
<dbReference type="EMBL" id="AY174122">
    <property type="protein sequence ID" value="AAN73231.1"/>
    <property type="molecule type" value="mRNA"/>
</dbReference>
<dbReference type="EMBL" id="AY174123">
    <property type="protein sequence ID" value="AAN73232.1"/>
    <property type="molecule type" value="mRNA"/>
</dbReference>
<dbReference type="EMBL" id="AY174124">
    <property type="protein sequence ID" value="AAN73233.1"/>
    <property type="molecule type" value="mRNA"/>
</dbReference>
<dbReference type="EMBL" id="AY174125">
    <property type="protein sequence ID" value="AAN73234.1"/>
    <property type="molecule type" value="mRNA"/>
</dbReference>
<dbReference type="EMBL" id="AY174126">
    <property type="protein sequence ID" value="AAN73235.1"/>
    <property type="molecule type" value="mRNA"/>
</dbReference>
<dbReference type="EMBL" id="AY174127">
    <property type="protein sequence ID" value="AAN73236.1"/>
    <property type="molecule type" value="mRNA"/>
</dbReference>
<dbReference type="EMBL" id="AY174128">
    <property type="protein sequence ID" value="AAN73237.1"/>
    <property type="molecule type" value="mRNA"/>
</dbReference>
<dbReference type="EMBL" id="AY174129">
    <property type="protein sequence ID" value="AAN73238.1"/>
    <property type="molecule type" value="mRNA"/>
</dbReference>
<dbReference type="EMBL" id="AY174130">
    <property type="protein sequence ID" value="AAN73239.1"/>
    <property type="molecule type" value="mRNA"/>
</dbReference>
<dbReference type="EMBL" id="AY174131">
    <property type="protein sequence ID" value="AAN73240.1"/>
    <property type="molecule type" value="mRNA"/>
</dbReference>
<dbReference type="EMBL" id="AY174132">
    <property type="protein sequence ID" value="AAN73241.1"/>
    <property type="molecule type" value="mRNA"/>
</dbReference>
<dbReference type="EMBL" id="AY174133">
    <property type="protein sequence ID" value="AAN73242.1"/>
    <property type="molecule type" value="mRNA"/>
</dbReference>
<dbReference type="EMBL" id="AY174134">
    <property type="protein sequence ID" value="AAN73243.1"/>
    <property type="molecule type" value="mRNA"/>
</dbReference>
<dbReference type="EMBL" id="AY174135">
    <property type="protein sequence ID" value="AAN73244.1"/>
    <property type="molecule type" value="mRNA"/>
</dbReference>
<dbReference type="EMBL" id="AY174136">
    <property type="protein sequence ID" value="AAN73245.1"/>
    <property type="molecule type" value="mRNA"/>
</dbReference>
<dbReference type="EMBL" id="AY174137">
    <property type="protein sequence ID" value="AAN73246.1"/>
    <property type="molecule type" value="mRNA"/>
</dbReference>
<dbReference type="EMBL" id="AY174138">
    <property type="protein sequence ID" value="AAN73247.1"/>
    <property type="molecule type" value="mRNA"/>
</dbReference>
<dbReference type="EMBL" id="DQ309766">
    <property type="protein sequence ID" value="ABC33727.2"/>
    <property type="molecule type" value="mRNA"/>
</dbReference>
<dbReference type="EMBL" id="AC010542">
    <property type="status" value="NOT_ANNOTATED_CDS"/>
    <property type="molecule type" value="Genomic_DNA"/>
</dbReference>
<dbReference type="EMBL" id="CH471092">
    <property type="protein sequence ID" value="EAW83023.1"/>
    <property type="molecule type" value="Genomic_DNA"/>
</dbReference>
<dbReference type="EMBL" id="BC057852">
    <property type="protein sequence ID" value="AAH57852.2"/>
    <property type="molecule type" value="mRNA"/>
</dbReference>
<dbReference type="CCDS" id="CCDS10810.1">
    <molecule id="Q8IZ96-5"/>
</dbReference>
<dbReference type="CCDS" id="CCDS10811.1">
    <molecule id="Q8IZ96-6"/>
</dbReference>
<dbReference type="CCDS" id="CCDS10812.2">
    <molecule id="Q8IZ96-17"/>
</dbReference>
<dbReference type="CCDS" id="CCDS45503.1">
    <molecule id="Q8IZ96-1"/>
</dbReference>
<dbReference type="CCDS" id="CCDS54019.1">
    <molecule id="Q8IZ96-4"/>
</dbReference>
<dbReference type="CCDS" id="CCDS54020.1">
    <molecule id="Q8IZ96-7"/>
</dbReference>
<dbReference type="CCDS" id="CCDS54021.1">
    <molecule id="Q8IZ96-15"/>
</dbReference>
<dbReference type="RefSeq" id="NP_443725.3">
    <molecule id="Q8IZ96-17"/>
    <property type="nucleotide sequence ID" value="NM_052999.3"/>
</dbReference>
<dbReference type="RefSeq" id="NP_851785.2">
    <property type="nucleotide sequence ID" value="NM_181268.2"/>
</dbReference>
<dbReference type="RefSeq" id="NP_851786.1">
    <molecule id="Q8IZ96-1"/>
    <property type="nucleotide sequence ID" value="NM_181269.3"/>
</dbReference>
<dbReference type="RefSeq" id="NP_851787.1">
    <molecule id="Q8IZ96-4"/>
    <property type="nucleotide sequence ID" value="NM_181270.3"/>
</dbReference>
<dbReference type="RefSeq" id="NP_851788.1">
    <molecule id="Q8IZ96-5"/>
    <property type="nucleotide sequence ID" value="NM_181271.3"/>
</dbReference>
<dbReference type="RefSeq" id="NP_851789.1">
    <molecule id="Q8IZ96-6"/>
    <property type="nucleotide sequence ID" value="NM_181272.3"/>
</dbReference>
<dbReference type="RefSeq" id="NP_851800.1">
    <molecule id="Q8IZ96-7"/>
    <property type="nucleotide sequence ID" value="NM_181283.3"/>
</dbReference>
<dbReference type="RefSeq" id="NP_851813.1">
    <molecule id="Q8IZ96-15"/>
    <property type="nucleotide sequence ID" value="NM_181296.3"/>
</dbReference>
<dbReference type="BioGRID" id="125251">
    <property type="interactions" value="4"/>
</dbReference>
<dbReference type="FunCoup" id="Q8IZ96">
    <property type="interactions" value="1"/>
</dbReference>
<dbReference type="IntAct" id="Q8IZ96">
    <property type="interactions" value="2"/>
</dbReference>
<dbReference type="MINT" id="Q8IZ96"/>
<dbReference type="STRING" id="9606.ENSP00000368814"/>
<dbReference type="TCDB" id="1.A.64.5.5">
    <property type="family name" value="the plasmolipin (plasmolipin) family"/>
</dbReference>
<dbReference type="iPTMnet" id="Q8IZ96"/>
<dbReference type="PhosphoSitePlus" id="Q8IZ96"/>
<dbReference type="BioMuta" id="CMTM1"/>
<dbReference type="DMDM" id="34921810"/>
<dbReference type="MassIVE" id="Q8IZ96"/>
<dbReference type="PaxDb" id="9606-ENSP00000368814"/>
<dbReference type="PeptideAtlas" id="Q8IZ96"/>
<dbReference type="ProteomicsDB" id="71290">
    <molecule id="Q8IZ96-1"/>
</dbReference>
<dbReference type="ProteomicsDB" id="71291">
    <molecule id="Q8IZ96-10"/>
</dbReference>
<dbReference type="ProteomicsDB" id="71292">
    <molecule id="Q8IZ96-11"/>
</dbReference>
<dbReference type="ProteomicsDB" id="71294">
    <molecule id="Q8IZ96-13"/>
</dbReference>
<dbReference type="ProteomicsDB" id="71295">
    <molecule id="Q8IZ96-14"/>
</dbReference>
<dbReference type="ProteomicsDB" id="71296">
    <molecule id="Q8IZ96-15"/>
</dbReference>
<dbReference type="ProteomicsDB" id="71298">
    <molecule id="Q8IZ96-17"/>
</dbReference>
<dbReference type="ProteomicsDB" id="71301">
    <molecule id="Q8IZ96-4"/>
</dbReference>
<dbReference type="ProteomicsDB" id="71302">
    <molecule id="Q8IZ96-5"/>
</dbReference>
<dbReference type="ProteomicsDB" id="71303">
    <molecule id="Q8IZ96-6"/>
</dbReference>
<dbReference type="ProteomicsDB" id="71304">
    <molecule id="Q8IZ96-7"/>
</dbReference>
<dbReference type="ProteomicsDB" id="71305">
    <molecule id="Q8IZ96-8"/>
</dbReference>
<dbReference type="ProteomicsDB" id="71306">
    <molecule id="Q8IZ96-9"/>
</dbReference>
<dbReference type="Antibodypedia" id="2985">
    <property type="antibodies" value="118 antibodies from 20 providers"/>
</dbReference>
<dbReference type="DNASU" id="113540"/>
<dbReference type="Ensembl" id="ENST00000332695.11">
    <molecule id="Q8IZ96-5"/>
    <property type="protein sequence ID" value="ENSP00000331428.7"/>
    <property type="gene ID" value="ENSG00000089505.18"/>
</dbReference>
<dbReference type="Ensembl" id="ENST00000333001.10">
    <molecule id="Q8IZ96-9"/>
    <property type="protein sequence ID" value="ENSP00000331494.6"/>
    <property type="gene ID" value="ENSG00000089505.18"/>
</dbReference>
<dbReference type="Ensembl" id="ENST00000336328.10">
    <molecule id="Q8IZ96-6"/>
    <property type="protein sequence ID" value="ENSP00000337119.6"/>
    <property type="gene ID" value="ENSG00000089505.18"/>
</dbReference>
<dbReference type="Ensembl" id="ENST00000379500.7">
    <molecule id="Q8IZ96-17"/>
    <property type="protein sequence ID" value="ENSP00000368814.2"/>
    <property type="gene ID" value="ENSG00000089505.18"/>
</dbReference>
<dbReference type="Ensembl" id="ENST00000457188.6">
    <molecule id="Q8IZ96-1"/>
    <property type="protein sequence ID" value="ENSP00000405729.2"/>
    <property type="gene ID" value="ENSG00000089505.18"/>
</dbReference>
<dbReference type="Ensembl" id="ENST00000528324.5">
    <molecule id="Q8IZ96-4"/>
    <property type="protein sequence ID" value="ENSP00000432398.1"/>
    <property type="gene ID" value="ENSG00000089505.18"/>
</dbReference>
<dbReference type="Ensembl" id="ENST00000528484.5">
    <molecule id="Q8IZ96-13"/>
    <property type="protein sequence ID" value="ENSP00000437079.1"/>
    <property type="gene ID" value="ENSG00000089505.18"/>
</dbReference>
<dbReference type="Ensembl" id="ENST00000529386.5">
    <molecule id="Q8IZ96-13"/>
    <property type="protein sequence ID" value="ENSP00000431303.1"/>
    <property type="gene ID" value="ENSG00000089505.18"/>
</dbReference>
<dbReference type="Ensembl" id="ENST00000531885.5">
    <molecule id="Q8IZ96-7"/>
    <property type="protein sequence ID" value="ENSP00000432687.1"/>
    <property type="gene ID" value="ENSG00000089505.18"/>
</dbReference>
<dbReference type="Ensembl" id="ENST00000533078.5">
    <molecule id="Q8IZ96-14"/>
    <property type="protein sequence ID" value="ENSP00000432387.1"/>
    <property type="gene ID" value="ENSG00000089505.18"/>
</dbReference>
<dbReference type="Ensembl" id="ENST00000533666.5">
    <molecule id="Q8IZ96-15"/>
    <property type="protein sequence ID" value="ENSP00000435020.1"/>
    <property type="gene ID" value="ENSG00000089505.18"/>
</dbReference>
<dbReference type="Ensembl" id="ENST00000533915.5">
    <molecule id="Q8IZ96-9"/>
    <property type="protein sequence ID" value="ENSP00000435755.1"/>
    <property type="gene ID" value="ENSG00000089505.18"/>
</dbReference>
<dbReference type="GeneID" id="113540"/>
<dbReference type="KEGG" id="hsa:113540"/>
<dbReference type="MANE-Select" id="ENST00000379500.7">
    <molecule id="Q8IZ96-17"/>
    <property type="protein sequence ID" value="ENSP00000368814.2"/>
    <property type="RefSeq nucleotide sequence ID" value="NM_052999.4"/>
    <property type="RefSeq protein sequence ID" value="NP_443725.3"/>
</dbReference>
<dbReference type="UCSC" id="uc002epa.5">
    <molecule id="Q8IZ96-1"/>
    <property type="organism name" value="human"/>
</dbReference>
<dbReference type="AGR" id="HGNC:19172"/>
<dbReference type="CTD" id="113540"/>
<dbReference type="DisGeNET" id="113540"/>
<dbReference type="GeneCards" id="CMTM1"/>
<dbReference type="HGNC" id="HGNC:19172">
    <property type="gene designation" value="CMTM1"/>
</dbReference>
<dbReference type="HPA" id="ENSG00000089505">
    <property type="expression patterns" value="Tissue enriched (testis)"/>
</dbReference>
<dbReference type="MIM" id="607884">
    <property type="type" value="gene"/>
</dbReference>
<dbReference type="neXtProt" id="NX_Q8IZ96"/>
<dbReference type="OpenTargets" id="ENSG00000089505"/>
<dbReference type="PharmGKB" id="PA38811"/>
<dbReference type="VEuPathDB" id="HostDB:ENSG00000089505"/>
<dbReference type="eggNOG" id="KOG4788">
    <property type="taxonomic scope" value="Eukaryota"/>
</dbReference>
<dbReference type="GeneTree" id="ENSGT00940000163203"/>
<dbReference type="HOGENOM" id="CLU_108546_5_0_1"/>
<dbReference type="InParanoid" id="Q8IZ96"/>
<dbReference type="OMA" id="EACIVIF"/>
<dbReference type="OrthoDB" id="5976667at2759"/>
<dbReference type="PAN-GO" id="Q8IZ96">
    <property type="GO annotations" value="1 GO annotation based on evolutionary models"/>
</dbReference>
<dbReference type="PhylomeDB" id="Q8IZ96"/>
<dbReference type="TreeFam" id="TF338711"/>
<dbReference type="PathwayCommons" id="Q8IZ96"/>
<dbReference type="SignaLink" id="Q8IZ96"/>
<dbReference type="BioGRID-ORCS" id="113540">
    <property type="hits" value="10 hits in 1141 CRISPR screens"/>
</dbReference>
<dbReference type="ChiTaRS" id="CMTM1">
    <property type="organism name" value="human"/>
</dbReference>
<dbReference type="GenomeRNAi" id="113540"/>
<dbReference type="Pharos" id="Q8IZ96">
    <property type="development level" value="Tbio"/>
</dbReference>
<dbReference type="PRO" id="PR:Q8IZ96"/>
<dbReference type="Proteomes" id="UP000005640">
    <property type="component" value="Chromosome 16"/>
</dbReference>
<dbReference type="RNAct" id="Q8IZ96">
    <property type="molecule type" value="protein"/>
</dbReference>
<dbReference type="Bgee" id="ENSG00000089505">
    <property type="expression patterns" value="Expressed in left testis and 102 other cell types or tissues"/>
</dbReference>
<dbReference type="ExpressionAtlas" id="Q8IZ96">
    <property type="expression patterns" value="baseline and differential"/>
</dbReference>
<dbReference type="GO" id="GO:0005615">
    <property type="term" value="C:extracellular space"/>
    <property type="evidence" value="ECO:0007669"/>
    <property type="project" value="UniProtKB-KW"/>
</dbReference>
<dbReference type="GO" id="GO:0016020">
    <property type="term" value="C:membrane"/>
    <property type="evidence" value="ECO:0000318"/>
    <property type="project" value="GO_Central"/>
</dbReference>
<dbReference type="GO" id="GO:0005125">
    <property type="term" value="F:cytokine activity"/>
    <property type="evidence" value="ECO:0007669"/>
    <property type="project" value="UniProtKB-KW"/>
</dbReference>
<dbReference type="GO" id="GO:0006935">
    <property type="term" value="P:chemotaxis"/>
    <property type="evidence" value="ECO:0007669"/>
    <property type="project" value="UniProtKB-KW"/>
</dbReference>
<dbReference type="InterPro" id="IPR008253">
    <property type="entry name" value="Marvel"/>
</dbReference>
<dbReference type="InterPro" id="IPR050578">
    <property type="entry name" value="MARVEL-CKLF_proteins"/>
</dbReference>
<dbReference type="PANTHER" id="PTHR22776:SF43">
    <property type="entry name" value="CKLF-LIKE MARVEL TRANSMEMBRANE DOMAIN-CONTAINING PROTEIN 1"/>
    <property type="match status" value="1"/>
</dbReference>
<dbReference type="PANTHER" id="PTHR22776">
    <property type="entry name" value="MARVEL-CONTAINING POTENTIAL LIPID RAFT-ASSOCIATED PROTEIN"/>
    <property type="match status" value="1"/>
</dbReference>
<dbReference type="PROSITE" id="PS51225">
    <property type="entry name" value="MARVEL"/>
    <property type="match status" value="1"/>
</dbReference>
<keyword id="KW-0025">Alternative splicing</keyword>
<keyword id="KW-0145">Chemotaxis</keyword>
<keyword id="KW-0202">Cytokine</keyword>
<keyword id="KW-0472">Membrane</keyword>
<keyword id="KW-1267">Proteomics identification</keyword>
<keyword id="KW-1185">Reference proteome</keyword>
<keyword id="KW-0812">Transmembrane</keyword>
<keyword id="KW-1133">Transmembrane helix</keyword>